<reference key="1">
    <citation type="journal article" date="1996" name="DNA Res.">
        <title>Sequence analysis of the genome of the unicellular cyanobacterium Synechocystis sp. strain PCC6803. II. Sequence determination of the entire genome and assignment of potential protein-coding regions.</title>
        <authorList>
            <person name="Kaneko T."/>
            <person name="Sato S."/>
            <person name="Kotani H."/>
            <person name="Tanaka A."/>
            <person name="Asamizu E."/>
            <person name="Nakamura Y."/>
            <person name="Miyajima N."/>
            <person name="Hirosawa M."/>
            <person name="Sugiura M."/>
            <person name="Sasamoto S."/>
            <person name="Kimura T."/>
            <person name="Hosouchi T."/>
            <person name="Matsuno A."/>
            <person name="Muraki A."/>
            <person name="Nakazaki N."/>
            <person name="Naruo K."/>
            <person name="Okumura S."/>
            <person name="Shimpo S."/>
            <person name="Takeuchi C."/>
            <person name="Wada T."/>
            <person name="Watanabe A."/>
            <person name="Yamada M."/>
            <person name="Yasuda M."/>
            <person name="Tabata S."/>
        </authorList>
    </citation>
    <scope>NUCLEOTIDE SEQUENCE [LARGE SCALE GENOMIC DNA]</scope>
    <source>
        <strain>ATCC 27184 / PCC 6803 / Kazusa</strain>
    </source>
</reference>
<reference key="2">
    <citation type="journal article" date="2005" name="Mol. Microbiol.">
        <title>Retinal biosynthesis in Eubacteria: in vitro characterization of a novel carotenoid oxygenase from Synechocystis sp. PCC 6803.</title>
        <authorList>
            <person name="Ruch S."/>
            <person name="Beyer P."/>
            <person name="Ernst H."/>
            <person name="Al-Babili S."/>
        </authorList>
    </citation>
    <scope>CATALYTIC ACTIVITY</scope>
    <scope>SUBSTRATE SPECIFICITY</scope>
    <scope>BIOPHYSICOCHEMICAL PROPERTIES</scope>
    <scope>INDUCTION</scope>
</reference>
<reference key="3">
    <citation type="journal article" date="2005" name="Science">
        <title>The structure of a retinal-forming carotenoid oxygenase.</title>
        <authorList>
            <person name="Kloer D.P."/>
            <person name="Ruch S."/>
            <person name="Al-Babili S."/>
            <person name="Beyer P."/>
            <person name="Schulz G.E."/>
        </authorList>
    </citation>
    <scope>X-RAY CRYSTALLOGRAPHY (2.39 ANGSTROMS) OF APOENZYME AND IN COMPLEX WITH SUBSTRATE AND IRON</scope>
    <scope>COFACTOR</scope>
</reference>
<protein>
    <recommendedName>
        <fullName>Apocarotenoid-15,15'-oxygenase</fullName>
        <shortName>ACO</shortName>
    </recommendedName>
    <alternativeName>
        <fullName>8'-apo-beta-carotenal 15,15'-oxygenase</fullName>
        <ecNumber>1.13.11.75</ecNumber>
    </alternativeName>
    <alternativeName>
        <fullName>Diox1</fullName>
    </alternativeName>
</protein>
<organism>
    <name type="scientific">Synechocystis sp. (strain ATCC 27184 / PCC 6803 / Kazusa)</name>
    <dbReference type="NCBI Taxonomy" id="1111708"/>
    <lineage>
        <taxon>Bacteria</taxon>
        <taxon>Bacillati</taxon>
        <taxon>Cyanobacteriota</taxon>
        <taxon>Cyanophyceae</taxon>
        <taxon>Synechococcales</taxon>
        <taxon>Merismopediaceae</taxon>
        <taxon>Synechocystis</taxon>
    </lineage>
</organism>
<sequence>MVTSPPTSSPSQRSYSPQDWLRGYQSQPQEWDYWVEDVEGSIPPDLQGTLYRNGPGLLEIGDRPLKHPFDGDGMVTAFKFPGDGRVHFQSKFVRTQGYVEEQKAGKMIYRGVFGSQPAGGWLKTIFDLRLKNIANTNITYWGDRLLALWEGGQPHRLEPSNLATIGLDDLGGILAEGQPLSAHPRIDPASTFDGGQPCYVTFSIKSSLSSTLTLLELDPQGKLLRQKTETFPGFAFIHDFAITPHYAIFLQNNVTLNGLPYLFGLRGAGECVQFHPDKPAQIILVPRDGGEIKRIPVQAGFVFHHANAFEENGKIILDSICYNSLPQVDTDGDFRSTNFDNLDPGQLWRFTIDPAAATVEKQLMVSRCCEFPVVHPQQVGRPYRYVYMGAAHHSTGNAPLQAILKVDLESGTETLRSFAPHGFAGEPIFVPRPGGVAEDDGWLLCLIYKADLHRSELVILDAQDITAPAIATLKLKHHIPYPLHGSWAQT</sequence>
<proteinExistence type="evidence at protein level"/>
<comment type="function">
    <text>Cleaves a number of carotenals and carotenols in the all-trans configuration at the 15-15' double bond producing retinal or retinol, respectively. Also shows activity toward lycopenals and the corresponding alcohols. Does not cleave beta-carotene or lycopene.</text>
</comment>
<comment type="catalytic activity">
    <reaction evidence="1">
        <text>all-trans-8'-apo-beta-carotenal + O2 = (2E,4E,6E)-2,6-dimethylocta-2,4,6-trienedial + all-trans-retinal</text>
        <dbReference type="Rhea" id="RHEA:26385"/>
        <dbReference type="ChEBI" id="CHEBI:15379"/>
        <dbReference type="ChEBI" id="CHEBI:17898"/>
        <dbReference type="ChEBI" id="CHEBI:53154"/>
        <dbReference type="ChEBI" id="CHEBI:53155"/>
        <dbReference type="EC" id="1.13.11.75"/>
    </reaction>
</comment>
<comment type="cofactor">
    <cofactor evidence="2">
        <name>Fe(2+)</name>
        <dbReference type="ChEBI" id="CHEBI:29033"/>
    </cofactor>
    <text evidence="2">Binds 1 Fe(2+) ion per subunit.</text>
</comment>
<comment type="biophysicochemical properties">
    <kinetics>
        <KM evidence="1">2.5 uM for 8'-apo-beta-carotenal</KM>
        <KM evidence="1">43 uM for 8'-apo-beta-carotenol</KM>
        <KM evidence="1">1.4 uM for (3R)-3-OH-8'-apo-beta-carotenal</KM>
        <KM evidence="1">31 uM for (3R)-3-OH-8'-apo-beta-carotenol</KM>
        <KM evidence="1">2.6 uM for (3R)-3-OH-12'-apo-beta-carotenal</KM>
        <Vmax evidence="1">40.0 pmol/min/mg enzyme with 8'-apo-beta-carotenal as substrate</Vmax>
        <Vmax evidence="1">650.0 pmol/min/mg enzyme with 8'-apo-beta-carotenol as substrate</Vmax>
        <Vmax evidence="1">71.0 pmol/min/mg enzyme with (3R)-3-OH-8'-apo-beta-carotenal as substrate</Vmax>
        <Vmax evidence="1">705.0 pmol/min/mg enzyme with (3R)-3-OH-8'-apo-beta-carotenol as substrate</Vmax>
        <Vmax evidence="1">11.5 pmol/min/mg enzyme with (3R)-3-OH-12'-apo-beta-carotenal as substrate</Vmax>
    </kinetics>
</comment>
<comment type="induction">
    <text evidence="1">By high light.</text>
</comment>
<comment type="similarity">
    <text evidence="3">Belongs to the carotenoid oxygenase family.</text>
</comment>
<dbReference type="EC" id="1.13.11.75"/>
<dbReference type="EMBL" id="BA000022">
    <property type="protein sequence ID" value="BAA18428.1"/>
    <property type="molecule type" value="Genomic_DNA"/>
</dbReference>
<dbReference type="PIR" id="S76169">
    <property type="entry name" value="S76169"/>
</dbReference>
<dbReference type="PDB" id="2BIW">
    <property type="method" value="X-ray"/>
    <property type="resolution" value="2.39 A"/>
    <property type="chains" value="A/B/C/D=1-490"/>
</dbReference>
<dbReference type="PDB" id="2BIX">
    <property type="method" value="X-ray"/>
    <property type="resolution" value="2.68 A"/>
    <property type="chains" value="A/B=1-490"/>
</dbReference>
<dbReference type="PDB" id="4OU8">
    <property type="method" value="X-ray"/>
    <property type="resolution" value="2.80 A"/>
    <property type="chains" value="A/B/C/D=1-490"/>
</dbReference>
<dbReference type="PDB" id="4OU9">
    <property type="method" value="X-ray"/>
    <property type="resolution" value="2.00 A"/>
    <property type="chains" value="A/B/C/D=1-490"/>
</dbReference>
<dbReference type="PDB" id="5KJA">
    <property type="method" value="X-ray"/>
    <property type="resolution" value="2.80 A"/>
    <property type="chains" value="A/B/C/D/E=1-490"/>
</dbReference>
<dbReference type="PDB" id="5KJB">
    <property type="method" value="X-ray"/>
    <property type="resolution" value="2.81 A"/>
    <property type="chains" value="A/B/C/D/E=1-490"/>
</dbReference>
<dbReference type="PDB" id="5KJD">
    <property type="method" value="X-ray"/>
    <property type="resolution" value="2.75 A"/>
    <property type="chains" value="A/B/C/D/E=1-490"/>
</dbReference>
<dbReference type="PDB" id="5KK0">
    <property type="method" value="X-ray"/>
    <property type="resolution" value="2.80 A"/>
    <property type="chains" value="A/B/C/D=1-490"/>
</dbReference>
<dbReference type="PDB" id="6BIG">
    <property type="method" value="X-ray"/>
    <property type="resolution" value="2.21 A"/>
    <property type="chains" value="A/B/C/D=1-490"/>
</dbReference>
<dbReference type="PDB" id="6C7K">
    <property type="method" value="X-ray"/>
    <property type="resolution" value="2.50 A"/>
    <property type="chains" value="A/B/C/D=1-490"/>
</dbReference>
<dbReference type="PDB" id="6C7O">
    <property type="method" value="X-ray"/>
    <property type="resolution" value="3.15 A"/>
    <property type="chains" value="A/B=1-490"/>
</dbReference>
<dbReference type="PDB" id="6C7P">
    <property type="method" value="X-ray"/>
    <property type="resolution" value="2.60 A"/>
    <property type="chains" value="A/B=1-490"/>
</dbReference>
<dbReference type="PDBsum" id="2BIW"/>
<dbReference type="PDBsum" id="2BIX"/>
<dbReference type="PDBsum" id="4OU8"/>
<dbReference type="PDBsum" id="4OU9"/>
<dbReference type="PDBsum" id="5KJA"/>
<dbReference type="PDBsum" id="5KJB"/>
<dbReference type="PDBsum" id="5KJD"/>
<dbReference type="PDBsum" id="5KK0"/>
<dbReference type="PDBsum" id="6BIG"/>
<dbReference type="PDBsum" id="6C7K"/>
<dbReference type="PDBsum" id="6C7O"/>
<dbReference type="PDBsum" id="6C7P"/>
<dbReference type="SMR" id="P74334"/>
<dbReference type="IntAct" id="P74334">
    <property type="interactions" value="2"/>
</dbReference>
<dbReference type="STRING" id="1148.gene:10499304"/>
<dbReference type="DrugBank" id="DB02253">
    <property type="generic name" value="(1r)-4-[(1e,3e,5e,7z,9e,11z,13e,15e)-17-Hydroxy-3,7,12,16-Tetramethylheptadeca-1,3,5,7,9,11,13,15-Octaen-1-Yl]-3,5,5-Trimethylcyclohex-3-En-1-Ol"/>
</dbReference>
<dbReference type="DrugBank" id="DB04233">
    <property type="generic name" value="(Hydroxyethyloxy)Tri(Ethyloxy)Octane"/>
</dbReference>
<dbReference type="PaxDb" id="1148-1653515"/>
<dbReference type="EnsemblBacteria" id="BAA18428">
    <property type="protein sequence ID" value="BAA18428"/>
    <property type="gene ID" value="BAA18428"/>
</dbReference>
<dbReference type="KEGG" id="syn:sll1541"/>
<dbReference type="eggNOG" id="COG3670">
    <property type="taxonomic scope" value="Bacteria"/>
</dbReference>
<dbReference type="InParanoid" id="P74334"/>
<dbReference type="PhylomeDB" id="P74334"/>
<dbReference type="BioCyc" id="MetaCyc:MONOMER-15972"/>
<dbReference type="BRENDA" id="1.13.11.75">
    <property type="organism ID" value="6192"/>
</dbReference>
<dbReference type="SABIO-RK" id="P74334"/>
<dbReference type="EvolutionaryTrace" id="P74334"/>
<dbReference type="Proteomes" id="UP000001425">
    <property type="component" value="Chromosome"/>
</dbReference>
<dbReference type="GO" id="GO:0102162">
    <property type="term" value="F:all-trans-8'-apo-beta-carotenal 15,15'-oxygenase activity"/>
    <property type="evidence" value="ECO:0007669"/>
    <property type="project" value="UniProtKB-EC"/>
</dbReference>
<dbReference type="GO" id="GO:0010436">
    <property type="term" value="F:carotenoid dioxygenase activity"/>
    <property type="evidence" value="ECO:0000318"/>
    <property type="project" value="GO_Central"/>
</dbReference>
<dbReference type="GO" id="GO:0046872">
    <property type="term" value="F:metal ion binding"/>
    <property type="evidence" value="ECO:0007669"/>
    <property type="project" value="UniProtKB-KW"/>
</dbReference>
<dbReference type="GO" id="GO:0016121">
    <property type="term" value="P:carotene catabolic process"/>
    <property type="evidence" value="ECO:0000318"/>
    <property type="project" value="GO_Central"/>
</dbReference>
<dbReference type="InterPro" id="IPR004294">
    <property type="entry name" value="Carotenoid_Oase"/>
</dbReference>
<dbReference type="PANTHER" id="PTHR10543">
    <property type="entry name" value="BETA-CAROTENE DIOXYGENASE"/>
    <property type="match status" value="1"/>
</dbReference>
<dbReference type="PANTHER" id="PTHR10543:SF89">
    <property type="entry name" value="CAROTENOID 9,10(9',10')-CLEAVAGE DIOXYGENASE 1"/>
    <property type="match status" value="1"/>
</dbReference>
<dbReference type="Pfam" id="PF03055">
    <property type="entry name" value="RPE65"/>
    <property type="match status" value="1"/>
</dbReference>
<feature type="chain" id="PRO_0000387567" description="Apocarotenoid-15,15'-oxygenase">
    <location>
        <begin position="1"/>
        <end position="490"/>
    </location>
</feature>
<feature type="binding site" evidence="2">
    <location>
        <position position="183"/>
    </location>
    <ligand>
        <name>Fe cation</name>
        <dbReference type="ChEBI" id="CHEBI:24875"/>
        <note>catalytic</note>
    </ligand>
</feature>
<feature type="binding site" evidence="2">
    <location>
        <position position="206"/>
    </location>
    <ligand>
        <name>substrate</name>
    </ligand>
</feature>
<feature type="binding site" evidence="2">
    <location>
        <position position="238"/>
    </location>
    <ligand>
        <name>Fe cation</name>
        <dbReference type="ChEBI" id="CHEBI:24875"/>
        <note>catalytic</note>
    </ligand>
</feature>
<feature type="binding site" evidence="2">
    <location>
        <position position="303"/>
    </location>
    <ligand>
        <name>substrate</name>
    </ligand>
</feature>
<feature type="binding site" evidence="2">
    <location>
        <position position="304"/>
    </location>
    <ligand>
        <name>Fe cation</name>
        <dbReference type="ChEBI" id="CHEBI:24875"/>
        <note>catalytic</note>
    </ligand>
</feature>
<feature type="binding site" evidence="2">
    <location>
        <position position="484"/>
    </location>
    <ligand>
        <name>Fe cation</name>
        <dbReference type="ChEBI" id="CHEBI:24875"/>
        <note>catalytic</note>
    </ligand>
</feature>
<feature type="helix" evidence="4">
    <location>
        <begin position="17"/>
        <end position="22"/>
    </location>
</feature>
<feature type="strand" evidence="4">
    <location>
        <begin position="31"/>
        <end position="34"/>
    </location>
</feature>
<feature type="strand" evidence="4">
    <location>
        <begin position="38"/>
        <end position="40"/>
    </location>
</feature>
<feature type="strand" evidence="4">
    <location>
        <begin position="48"/>
        <end position="55"/>
    </location>
</feature>
<feature type="strand" evidence="4">
    <location>
        <begin position="58"/>
        <end position="60"/>
    </location>
</feature>
<feature type="helix" evidence="4">
    <location>
        <begin position="68"/>
        <end position="70"/>
    </location>
</feature>
<feature type="strand" evidence="4">
    <location>
        <begin position="73"/>
        <end position="80"/>
    </location>
</feature>
<feature type="strand" evidence="4">
    <location>
        <begin position="82"/>
        <end position="84"/>
    </location>
</feature>
<feature type="strand" evidence="4">
    <location>
        <begin position="87"/>
        <end position="92"/>
    </location>
</feature>
<feature type="helix" evidence="4">
    <location>
        <begin position="96"/>
        <end position="104"/>
    </location>
</feature>
<feature type="helix" evidence="4">
    <location>
        <begin position="121"/>
        <end position="124"/>
    </location>
</feature>
<feature type="strand" evidence="4">
    <location>
        <begin position="136"/>
        <end position="141"/>
    </location>
</feature>
<feature type="strand" evidence="4">
    <location>
        <begin position="144"/>
        <end position="148"/>
    </location>
</feature>
<feature type="strand" evidence="4">
    <location>
        <begin position="155"/>
        <end position="157"/>
    </location>
</feature>
<feature type="turn" evidence="4">
    <location>
        <begin position="159"/>
        <end position="161"/>
    </location>
</feature>
<feature type="strand" evidence="4">
    <location>
        <begin position="164"/>
        <end position="167"/>
    </location>
</feature>
<feature type="turn" evidence="4">
    <location>
        <begin position="170"/>
        <end position="173"/>
    </location>
</feature>
<feature type="strand" evidence="4">
    <location>
        <begin position="185"/>
        <end position="189"/>
    </location>
</feature>
<feature type="turn" evidence="4">
    <location>
        <begin position="191"/>
        <end position="195"/>
    </location>
</feature>
<feature type="strand" evidence="4">
    <location>
        <begin position="198"/>
        <end position="217"/>
    </location>
</feature>
<feature type="strand" evidence="4">
    <location>
        <begin position="223"/>
        <end position="233"/>
    </location>
</feature>
<feature type="strand" evidence="6">
    <location>
        <begin position="240"/>
        <end position="242"/>
    </location>
</feature>
<feature type="strand" evidence="4">
    <location>
        <begin position="244"/>
        <end position="251"/>
    </location>
</feature>
<feature type="strand" evidence="4">
    <location>
        <begin position="254"/>
        <end position="256"/>
    </location>
</feature>
<feature type="helix" evidence="4">
    <location>
        <begin position="259"/>
        <end position="262"/>
    </location>
</feature>
<feature type="helix" evidence="4">
    <location>
        <begin position="268"/>
        <end position="271"/>
    </location>
</feature>
<feature type="strand" evidence="4">
    <location>
        <begin position="272"/>
        <end position="274"/>
    </location>
</feature>
<feature type="strand" evidence="8">
    <location>
        <begin position="276"/>
        <end position="278"/>
    </location>
</feature>
<feature type="strand" evidence="4">
    <location>
        <begin position="280"/>
        <end position="286"/>
    </location>
</feature>
<feature type="strand" evidence="4">
    <location>
        <begin position="293"/>
        <end position="297"/>
    </location>
</feature>
<feature type="strand" evidence="4">
    <location>
        <begin position="301"/>
        <end position="311"/>
    </location>
</feature>
<feature type="strand" evidence="4">
    <location>
        <begin position="314"/>
        <end position="323"/>
    </location>
</feature>
<feature type="helix" evidence="4">
    <location>
        <begin position="334"/>
        <end position="336"/>
    </location>
</feature>
<feature type="helix" evidence="4">
    <location>
        <begin position="339"/>
        <end position="341"/>
    </location>
</feature>
<feature type="strand" evidence="4">
    <location>
        <begin position="345"/>
        <end position="353"/>
    </location>
</feature>
<feature type="turn" evidence="4">
    <location>
        <begin position="354"/>
        <end position="357"/>
    </location>
</feature>
<feature type="strand" evidence="4">
    <location>
        <begin position="358"/>
        <end position="365"/>
    </location>
</feature>
<feature type="strand" evidence="4">
    <location>
        <begin position="369"/>
        <end position="373"/>
    </location>
</feature>
<feature type="helix" evidence="4">
    <location>
        <begin position="376"/>
        <end position="378"/>
    </location>
</feature>
<feature type="strand" evidence="7">
    <location>
        <begin position="379"/>
        <end position="381"/>
    </location>
</feature>
<feature type="strand" evidence="4">
    <location>
        <begin position="384"/>
        <end position="390"/>
    </location>
</feature>
<feature type="strand" evidence="4">
    <location>
        <begin position="392"/>
        <end position="396"/>
    </location>
</feature>
<feature type="strand" evidence="4">
    <location>
        <begin position="402"/>
        <end position="407"/>
    </location>
</feature>
<feature type="turn" evidence="4">
    <location>
        <begin position="408"/>
        <end position="410"/>
    </location>
</feature>
<feature type="strand" evidence="4">
    <location>
        <begin position="413"/>
        <end position="417"/>
    </location>
</feature>
<feature type="turn" evidence="4">
    <location>
        <begin position="419"/>
        <end position="421"/>
    </location>
</feature>
<feature type="strand" evidence="4">
    <location>
        <begin position="428"/>
        <end position="431"/>
    </location>
</feature>
<feature type="strand" evidence="7">
    <location>
        <begin position="437"/>
        <end position="439"/>
    </location>
</feature>
<feature type="strand" evidence="4">
    <location>
        <begin position="441"/>
        <end position="449"/>
    </location>
</feature>
<feature type="turn" evidence="4">
    <location>
        <begin position="450"/>
        <end position="453"/>
    </location>
</feature>
<feature type="strand" evidence="4">
    <location>
        <begin position="454"/>
        <end position="461"/>
    </location>
</feature>
<feature type="strand" evidence="5">
    <location>
        <begin position="465"/>
        <end position="467"/>
    </location>
</feature>
<feature type="strand" evidence="4">
    <location>
        <begin position="470"/>
        <end position="474"/>
    </location>
</feature>
<feature type="strand" evidence="4">
    <location>
        <begin position="485"/>
        <end position="489"/>
    </location>
</feature>
<evidence type="ECO:0000269" key="1">
    <source>
    </source>
</evidence>
<evidence type="ECO:0000269" key="2">
    <source>
    </source>
</evidence>
<evidence type="ECO:0000305" key="3"/>
<evidence type="ECO:0007829" key="4">
    <source>
        <dbReference type="PDB" id="4OU9"/>
    </source>
</evidence>
<evidence type="ECO:0007829" key="5">
    <source>
        <dbReference type="PDB" id="5KJB"/>
    </source>
</evidence>
<evidence type="ECO:0007829" key="6">
    <source>
        <dbReference type="PDB" id="5KJD"/>
    </source>
</evidence>
<evidence type="ECO:0007829" key="7">
    <source>
        <dbReference type="PDB" id="6C7O"/>
    </source>
</evidence>
<evidence type="ECO:0007829" key="8">
    <source>
        <dbReference type="PDB" id="6C7P"/>
    </source>
</evidence>
<keyword id="KW-0002">3D-structure</keyword>
<keyword id="KW-0223">Dioxygenase</keyword>
<keyword id="KW-0408">Iron</keyword>
<keyword id="KW-0479">Metal-binding</keyword>
<keyword id="KW-0560">Oxidoreductase</keyword>
<keyword id="KW-1185">Reference proteome</keyword>
<name>ACOX_SYNY3</name>
<gene>
    <name type="ordered locus">sll1541</name>
</gene>
<accession>P74334</accession>